<sequence length="123" mass="13659">MEKSPPETAAAAAEVAARFRSLVDTGDIGAIRQTQHLILGRLQDSNAVLTHFNEYSEQCFAEVSNDFASKTRLLKSMKDDLDHIFLKLRSMKSRLAATYPDAFPDGAMAKTMDQRPDLESPLD</sequence>
<dbReference type="EMBL" id="AY224579">
    <property type="protein sequence ID" value="AAO72699.1"/>
    <property type="molecule type" value="mRNA"/>
</dbReference>
<dbReference type="EMBL" id="AY224483">
    <property type="protein sequence ID" value="AAO72602.1"/>
    <property type="molecule type" value="mRNA"/>
</dbReference>
<dbReference type="EMBL" id="DP000009">
    <property type="protein sequence ID" value="ABF97826.1"/>
    <property type="molecule type" value="Genomic_DNA"/>
</dbReference>
<dbReference type="EMBL" id="AP014959">
    <property type="protein sequence ID" value="BAS85426.1"/>
    <property type="molecule type" value="Genomic_DNA"/>
</dbReference>
<dbReference type="EMBL" id="AK120523">
    <property type="protein sequence ID" value="BAH00048.1"/>
    <property type="molecule type" value="mRNA"/>
</dbReference>
<dbReference type="SMR" id="Q6ASS9"/>
<dbReference type="FunCoup" id="Q6ASS9">
    <property type="interactions" value="459"/>
</dbReference>
<dbReference type="IntAct" id="Q6ASS9">
    <property type="interactions" value="1"/>
</dbReference>
<dbReference type="STRING" id="39947.Q6ASS9"/>
<dbReference type="PaxDb" id="39947-Q6ASS9"/>
<dbReference type="EnsemblPlants" id="Os03t0640400-01">
    <property type="protein sequence ID" value="Os03t0640400-01"/>
    <property type="gene ID" value="Os03g0640400"/>
</dbReference>
<dbReference type="Gramene" id="Os03t0640400-01">
    <property type="protein sequence ID" value="Os03t0640400-01"/>
    <property type="gene ID" value="Os03g0640400"/>
</dbReference>
<dbReference type="KEGG" id="osa:4333543"/>
<dbReference type="eggNOG" id="KOG3443">
    <property type="taxonomic scope" value="Eukaryota"/>
</dbReference>
<dbReference type="HOGENOM" id="CLU_094353_2_0_1"/>
<dbReference type="InParanoid" id="Q6ASS9"/>
<dbReference type="OMA" id="NDYSEQC"/>
<dbReference type="OrthoDB" id="10258877at2759"/>
<dbReference type="Proteomes" id="UP000059680">
    <property type="component" value="Chromosome 3"/>
</dbReference>
<dbReference type="GO" id="GO:0099078">
    <property type="term" value="C:BORC complex"/>
    <property type="evidence" value="ECO:0000318"/>
    <property type="project" value="GO_Central"/>
</dbReference>
<dbReference type="GO" id="GO:0005737">
    <property type="term" value="C:cytoplasm"/>
    <property type="evidence" value="ECO:0000314"/>
    <property type="project" value="UniProtKB"/>
</dbReference>
<dbReference type="GO" id="GO:0005634">
    <property type="term" value="C:nucleus"/>
    <property type="evidence" value="ECO:0000314"/>
    <property type="project" value="UniProtKB"/>
</dbReference>
<dbReference type="GO" id="GO:0042803">
    <property type="term" value="F:protein homodimerization activity"/>
    <property type="evidence" value="ECO:0000314"/>
    <property type="project" value="UniProtKB"/>
</dbReference>
<dbReference type="GO" id="GO:0032418">
    <property type="term" value="P:lysosome localization"/>
    <property type="evidence" value="ECO:0000318"/>
    <property type="project" value="GO_Central"/>
</dbReference>
<dbReference type="InterPro" id="IPR039843">
    <property type="entry name" value="KXD1-like"/>
</dbReference>
<dbReference type="InterPro" id="IPR019371">
    <property type="entry name" value="KxDL_dom"/>
</dbReference>
<dbReference type="PANTHER" id="PTHR13511">
    <property type="entry name" value="KXDL MOTIF-CONTAINING PROTEIN 1"/>
    <property type="match status" value="1"/>
</dbReference>
<dbReference type="PANTHER" id="PTHR13511:SF0">
    <property type="entry name" value="KXDL MOTIF-CONTAINING PROTEIN 1"/>
    <property type="match status" value="1"/>
</dbReference>
<dbReference type="Pfam" id="PF10241">
    <property type="entry name" value="KxDL"/>
    <property type="match status" value="1"/>
</dbReference>
<comment type="function">
    <text evidence="1">Contributes, together with ILI5/BUL1 and BC1, to the promotion of leaf inclination and grain size by modulating cell elongation.</text>
</comment>
<comment type="subunit">
    <text evidence="1 2 3">Homodimer (PubMed:27879391). Component of a nuclear cell elongation controlling complex made of ILI5/BUL1, LO9-177 and BC1 (PubMed:27879391, PubMed:28029278). Binds directly to ILI5/BUL1, ILI4/BU1, BUL2 and BUL3 (PubMed:27879391). Binds to BC1 in the nucleus (PubMed:27879391). Interacts with BCL1 (PubMed:34360554).</text>
</comment>
<comment type="subcellular location">
    <subcellularLocation>
        <location evidence="1">Nucleus</location>
    </subcellularLocation>
    <subcellularLocation>
        <location evidence="1">Cytoplasm</location>
    </subcellularLocation>
</comment>
<comment type="tissue specificity">
    <text evidence="1">Mostly expressed in leaves blades and leaves sheaths and, to a lower extent, in seedings, roots, collars and panicles.</text>
</comment>
<comment type="developmental stage">
    <text evidence="1">In spikelets, expressed in paleas, lemmas, filaments and anthers, especially in tapetums.</text>
</comment>
<comment type="similarity">
    <text evidence="5">Belongs to the KXD1 family.</text>
</comment>
<proteinExistence type="evidence at protein level"/>
<organism>
    <name type="scientific">Oryza sativa subsp. japonica</name>
    <name type="common">Rice</name>
    <dbReference type="NCBI Taxonomy" id="39947"/>
    <lineage>
        <taxon>Eukaryota</taxon>
        <taxon>Viridiplantae</taxon>
        <taxon>Streptophyta</taxon>
        <taxon>Embryophyta</taxon>
        <taxon>Tracheophyta</taxon>
        <taxon>Spermatophyta</taxon>
        <taxon>Magnoliopsida</taxon>
        <taxon>Liliopsida</taxon>
        <taxon>Poales</taxon>
        <taxon>Poaceae</taxon>
        <taxon>BOP clade</taxon>
        <taxon>Oryzoideae</taxon>
        <taxon>Oryzeae</taxon>
        <taxon>Oryzinae</taxon>
        <taxon>Oryza</taxon>
        <taxon>Oryza sativa</taxon>
    </lineage>
</organism>
<name>LO917_ORYSJ</name>
<evidence type="ECO:0000269" key="1">
    <source>
    </source>
</evidence>
<evidence type="ECO:0000269" key="2">
    <source>
    </source>
</evidence>
<evidence type="ECO:0000269" key="3">
    <source>
    </source>
</evidence>
<evidence type="ECO:0000303" key="4">
    <source>
    </source>
</evidence>
<evidence type="ECO:0000305" key="5"/>
<evidence type="ECO:0000312" key="6">
    <source>
        <dbReference type="EMBL" id="BAS85426.1"/>
    </source>
</evidence>
<gene>
    <name evidence="4" type="primary">LO9-177</name>
    <name evidence="5" type="ordered locus">LOC_Os03g43910</name>
    <name evidence="5" type="ordered locus">Os03g0640400</name>
    <name evidence="6" type="ORF">OSNPB_030640400</name>
</gene>
<accession>Q6ASS9</accession>
<accession>Q0DQ30</accession>
<accession>Q84JG3</accession>
<reference key="1">
    <citation type="journal article" date="2003" name="Plant Mol. Biol.">
        <title>Identification of rice (Oryza sativa) proteins linked to the cyclin-mediated regulation of the cell cycle.</title>
        <authorList>
            <person name="Cooper B."/>
            <person name="Hutchison D."/>
            <person name="Park S."/>
            <person name="Guimil S."/>
            <person name="Luginbuehl P."/>
            <person name="Ellero C."/>
            <person name="Goff S.A."/>
            <person name="Glazebrook J."/>
        </authorList>
    </citation>
    <scope>NUCLEOTIDE SEQUENCE [MRNA]</scope>
    <source>
        <strain>cv. Nipponbare</strain>
    </source>
</reference>
<reference key="2">
    <citation type="journal article" date="2003" name="Proc. Natl. Acad. Sci. U.S.A.">
        <title>A network of rice genes associated with stress response and seed development.</title>
        <authorList>
            <person name="Cooper B."/>
            <person name="Clarke J.D."/>
            <person name="Budworth P."/>
            <person name="Kreps J."/>
            <person name="Hutchison D."/>
            <person name="Park S."/>
            <person name="Guimil S."/>
            <person name="Dunn M."/>
            <person name="Luginbuehl P."/>
            <person name="Ellero C."/>
            <person name="Goff S.A."/>
            <person name="Glazebrook J."/>
        </authorList>
    </citation>
    <scope>NUCLEOTIDE SEQUENCE [MRNA]</scope>
    <source>
        <strain>cv. Nipponbare</strain>
    </source>
</reference>
<reference key="3">
    <citation type="journal article" date="2005" name="Genome Res.">
        <title>Sequence, annotation, and analysis of synteny between rice chromosome 3 and diverged grass species.</title>
        <authorList>
            <consortium name="The rice chromosome 3 sequencing consortium"/>
            <person name="Buell C.R."/>
            <person name="Yuan Q."/>
            <person name="Ouyang S."/>
            <person name="Liu J."/>
            <person name="Zhu W."/>
            <person name="Wang A."/>
            <person name="Maiti R."/>
            <person name="Haas B."/>
            <person name="Wortman J."/>
            <person name="Pertea M."/>
            <person name="Jones K.M."/>
            <person name="Kim M."/>
            <person name="Overton L."/>
            <person name="Tsitrin T."/>
            <person name="Fadrosh D."/>
            <person name="Bera J."/>
            <person name="Weaver B."/>
            <person name="Jin S."/>
            <person name="Johri S."/>
            <person name="Reardon M."/>
            <person name="Webb K."/>
            <person name="Hill J."/>
            <person name="Moffat K."/>
            <person name="Tallon L."/>
            <person name="Van Aken S."/>
            <person name="Lewis M."/>
            <person name="Utterback T."/>
            <person name="Feldblyum T."/>
            <person name="Zismann V."/>
            <person name="Iobst S."/>
            <person name="Hsiao J."/>
            <person name="de Vazeille A.R."/>
            <person name="Salzberg S.L."/>
            <person name="White O."/>
            <person name="Fraser C.M."/>
            <person name="Yu Y."/>
            <person name="Kim H."/>
            <person name="Rambo T."/>
            <person name="Currie J."/>
            <person name="Collura K."/>
            <person name="Kernodle-Thompson S."/>
            <person name="Wei F."/>
            <person name="Kudrna K."/>
            <person name="Ammiraju J.S.S."/>
            <person name="Luo M."/>
            <person name="Goicoechea J.L."/>
            <person name="Wing R.A."/>
            <person name="Henry D."/>
            <person name="Oates R."/>
            <person name="Palmer M."/>
            <person name="Pries G."/>
            <person name="Saski C."/>
            <person name="Simmons J."/>
            <person name="Soderlund C."/>
            <person name="Nelson W."/>
            <person name="de la Bastide M."/>
            <person name="Spiegel L."/>
            <person name="Nascimento L."/>
            <person name="Huang E."/>
            <person name="Preston R."/>
            <person name="Zutavern T."/>
            <person name="Palmer L."/>
            <person name="O'Shaughnessy A."/>
            <person name="Dike S."/>
            <person name="McCombie W.R."/>
            <person name="Minx P."/>
            <person name="Cordum H."/>
            <person name="Wilson R."/>
            <person name="Jin W."/>
            <person name="Lee H.R."/>
            <person name="Jiang J."/>
            <person name="Jackson S."/>
        </authorList>
    </citation>
    <scope>NUCLEOTIDE SEQUENCE [LARGE SCALE GENOMIC DNA]</scope>
    <source>
        <strain>cv. Nipponbare</strain>
    </source>
</reference>
<reference key="4">
    <citation type="journal article" date="2005" name="Nature">
        <title>The map-based sequence of the rice genome.</title>
        <authorList>
            <consortium name="International rice genome sequencing project (IRGSP)"/>
        </authorList>
    </citation>
    <scope>NUCLEOTIDE SEQUENCE [LARGE SCALE GENOMIC DNA]</scope>
    <source>
        <strain>cv. Nipponbare</strain>
    </source>
</reference>
<reference key="5">
    <citation type="journal article" date="2013" name="Rice">
        <title>Improvement of the Oryza sativa Nipponbare reference genome using next generation sequence and optical map data.</title>
        <authorList>
            <person name="Kawahara Y."/>
            <person name="de la Bastide M."/>
            <person name="Hamilton J.P."/>
            <person name="Kanamori H."/>
            <person name="McCombie W.R."/>
            <person name="Ouyang S."/>
            <person name="Schwartz D.C."/>
            <person name="Tanaka T."/>
            <person name="Wu J."/>
            <person name="Zhou S."/>
            <person name="Childs K.L."/>
            <person name="Davidson R.M."/>
            <person name="Lin H."/>
            <person name="Quesada-Ocampo L."/>
            <person name="Vaillancourt B."/>
            <person name="Sakai H."/>
            <person name="Lee S.S."/>
            <person name="Kim J."/>
            <person name="Numa H."/>
            <person name="Itoh T."/>
            <person name="Buell C.R."/>
            <person name="Matsumoto T."/>
        </authorList>
    </citation>
    <scope>GENOME REANNOTATION</scope>
    <source>
        <strain>cv. Nipponbare</strain>
    </source>
</reference>
<reference key="6">
    <citation type="journal article" date="2003" name="Science">
        <title>Collection, mapping, and annotation of over 28,000 cDNA clones from japonica rice.</title>
        <authorList>
            <consortium name="The rice full-length cDNA consortium"/>
        </authorList>
    </citation>
    <scope>NUCLEOTIDE SEQUENCE [LARGE SCALE MRNA]</scope>
    <source>
        <strain>cv. Nipponbare</strain>
    </source>
</reference>
<reference key="7">
    <citation type="journal article" date="2017" name="Plant Physiol.">
        <title>Rice leaf angle and grain size are affected by the OsBUL1 transcriptional activator complex.</title>
        <authorList>
            <person name="Jang S."/>
            <person name="An G."/>
            <person name="Li H.-Y."/>
        </authorList>
    </citation>
    <scope>FUNCTION</scope>
    <scope>INTERACTION WITH BC1; ILI5/BUL1; ILI4/BU1; ILI3/BUL2 AND BUL3</scope>
    <scope>SUBCELLULAR LOCATION</scope>
    <scope>TISSUE SPECIFICITY</scope>
    <scope>DEVELOPMENTAL STAGE</scope>
</reference>
<reference key="8">
    <citation type="journal article" date="2017" name="Plant Signal. Behav.">
        <title>A novel trimeric complex in plant cells that contributes to the lamina inclination of rice.</title>
        <authorList>
            <person name="Jang S."/>
        </authorList>
    </citation>
    <scope>SUBUNIT</scope>
</reference>
<reference key="9">
    <citation type="journal article" date="2021" name="Int. J. Mol. Sci.">
        <title>Modulation of Rice Leaf Angle and Grain Size by Expressing OsBCL1 and OsBCL2 under the Control of OsBUL1 Promoter.</title>
        <authorList>
            <person name="Jang S."/>
            <person name="Cho J.-Y."/>
            <person name="Do G.-R."/>
            <person name="Kang Y."/>
            <person name="Li H.-Y."/>
            <person name="Song J."/>
            <person name="Kim H.-Y."/>
            <person name="Kim B.-G."/>
            <person name="Hsing Y.-I."/>
        </authorList>
    </citation>
    <scope>INTERACTION WITH BCL1</scope>
    <source>
        <strain>cv. Tainung 67</strain>
    </source>
</reference>
<feature type="chain" id="PRO_0000456867" description="KxDL motif-containing protein LO9-177">
    <location>
        <begin position="1"/>
        <end position="123"/>
    </location>
</feature>
<feature type="short sequence motif" description="KxDL">
    <location>
        <begin position="78"/>
        <end position="81"/>
    </location>
</feature>
<feature type="sequence conflict" description="In Ref. 1; AAO72699 and 2; AAO72602." evidence="5" ref="1 2">
    <original>A</original>
    <variation>E</variation>
    <location>
        <position position="16"/>
    </location>
</feature>
<protein>
    <recommendedName>
        <fullName evidence="4">KxDL motif-containing protein LO9-177</fullName>
    </recommendedName>
</protein>
<keyword id="KW-0963">Cytoplasm</keyword>
<keyword id="KW-0539">Nucleus</keyword>
<keyword id="KW-1185">Reference proteome</keyword>